<feature type="chain" id="PRO_1000202105" description="Ribosome-recycling factor">
    <location>
        <begin position="1"/>
        <end position="185"/>
    </location>
</feature>
<feature type="region of interest" description="Disordered" evidence="2">
    <location>
        <begin position="138"/>
        <end position="160"/>
    </location>
</feature>
<reference key="1">
    <citation type="journal article" date="2010" name="J. Bacteriol.">
        <title>Genome sequence of the Fleming strain of Micrococcus luteus, a simple free-living actinobacterium.</title>
        <authorList>
            <person name="Young M."/>
            <person name="Artsatbanov V."/>
            <person name="Beller H.R."/>
            <person name="Chandra G."/>
            <person name="Chater K.F."/>
            <person name="Dover L.G."/>
            <person name="Goh E.B."/>
            <person name="Kahan T."/>
            <person name="Kaprelyants A.S."/>
            <person name="Kyrpides N."/>
            <person name="Lapidus A."/>
            <person name="Lowry S.R."/>
            <person name="Lykidis A."/>
            <person name="Mahillon J."/>
            <person name="Markowitz V."/>
            <person name="Mavromatis K."/>
            <person name="Mukamolova G.V."/>
            <person name="Oren A."/>
            <person name="Rokem J.S."/>
            <person name="Smith M.C."/>
            <person name="Young D.I."/>
            <person name="Greenblatt C.L."/>
        </authorList>
    </citation>
    <scope>NUCLEOTIDE SEQUENCE [LARGE SCALE GENOMIC DNA]</scope>
    <source>
        <strain>ATCC 4698 / DSM 20030 / JCM 1464 / CCM 169 / CCUG 5858 / IAM 1056 / NBRC 3333 / NCIMB 9278 / NCTC 2665 / VKM Ac-2230</strain>
    </source>
</reference>
<keyword id="KW-0963">Cytoplasm</keyword>
<keyword id="KW-0648">Protein biosynthesis</keyword>
<keyword id="KW-1185">Reference proteome</keyword>
<name>RRF_MICLC</name>
<sequence>MIQETLQSAEEQMDRTIEATREDFVSVRTGRANPGLYSKVMVDYYGSFTPLQQLASFTTTDARTLLITPFDQSALRNIEKALSESEVGANPSNDGKVIRIVMPELTAERRKEYVKLVKSKAEEHKISVRNARRKAKEAMDKAVKDGEVGEDEGARGEKELDALTKRHVELIDEMAKNKEQELLEV</sequence>
<organism>
    <name type="scientific">Micrococcus luteus (strain ATCC 4698 / DSM 20030 / JCM 1464 / CCM 169 / CCUG 5858 / IAM 1056 / NBRC 3333 / NCIMB 9278 / NCTC 2665 / VKM Ac-2230)</name>
    <name type="common">Micrococcus lysodeikticus</name>
    <dbReference type="NCBI Taxonomy" id="465515"/>
    <lineage>
        <taxon>Bacteria</taxon>
        <taxon>Bacillati</taxon>
        <taxon>Actinomycetota</taxon>
        <taxon>Actinomycetes</taxon>
        <taxon>Micrococcales</taxon>
        <taxon>Micrococcaceae</taxon>
        <taxon>Micrococcus</taxon>
    </lineage>
</organism>
<accession>C5C9Q7</accession>
<proteinExistence type="inferred from homology"/>
<protein>
    <recommendedName>
        <fullName evidence="1">Ribosome-recycling factor</fullName>
        <shortName evidence="1">RRF</shortName>
    </recommendedName>
    <alternativeName>
        <fullName evidence="1">Ribosome-releasing factor</fullName>
    </alternativeName>
</protein>
<evidence type="ECO:0000255" key="1">
    <source>
        <dbReference type="HAMAP-Rule" id="MF_00040"/>
    </source>
</evidence>
<evidence type="ECO:0000256" key="2">
    <source>
        <dbReference type="SAM" id="MobiDB-lite"/>
    </source>
</evidence>
<gene>
    <name evidence="1" type="primary">frr</name>
    <name type="ordered locus">Mlut_06770</name>
</gene>
<comment type="function">
    <text evidence="1">Responsible for the release of ribosomes from messenger RNA at the termination of protein biosynthesis. May increase the efficiency of translation by recycling ribosomes from one round of translation to another.</text>
</comment>
<comment type="subcellular location">
    <subcellularLocation>
        <location evidence="1">Cytoplasm</location>
    </subcellularLocation>
</comment>
<comment type="similarity">
    <text evidence="1">Belongs to the RRF family.</text>
</comment>
<dbReference type="EMBL" id="CP001628">
    <property type="protein sequence ID" value="ACS30209.1"/>
    <property type="molecule type" value="Genomic_DNA"/>
</dbReference>
<dbReference type="RefSeq" id="WP_010079155.1">
    <property type="nucleotide sequence ID" value="NC_012803.1"/>
</dbReference>
<dbReference type="SMR" id="C5C9Q7"/>
<dbReference type="STRING" id="465515.Mlut_06770"/>
<dbReference type="EnsemblBacteria" id="ACS30209">
    <property type="protein sequence ID" value="ACS30209"/>
    <property type="gene ID" value="Mlut_06770"/>
</dbReference>
<dbReference type="GeneID" id="93344842"/>
<dbReference type="KEGG" id="mlu:Mlut_06770"/>
<dbReference type="PATRIC" id="fig|465515.4.peg.641"/>
<dbReference type="eggNOG" id="COG0233">
    <property type="taxonomic scope" value="Bacteria"/>
</dbReference>
<dbReference type="HOGENOM" id="CLU_073981_2_0_11"/>
<dbReference type="Proteomes" id="UP000000738">
    <property type="component" value="Chromosome"/>
</dbReference>
<dbReference type="GO" id="GO:0005737">
    <property type="term" value="C:cytoplasm"/>
    <property type="evidence" value="ECO:0007669"/>
    <property type="project" value="UniProtKB-SubCell"/>
</dbReference>
<dbReference type="GO" id="GO:0043023">
    <property type="term" value="F:ribosomal large subunit binding"/>
    <property type="evidence" value="ECO:0007669"/>
    <property type="project" value="TreeGrafter"/>
</dbReference>
<dbReference type="GO" id="GO:0006415">
    <property type="term" value="P:translational termination"/>
    <property type="evidence" value="ECO:0007669"/>
    <property type="project" value="UniProtKB-UniRule"/>
</dbReference>
<dbReference type="CDD" id="cd00520">
    <property type="entry name" value="RRF"/>
    <property type="match status" value="1"/>
</dbReference>
<dbReference type="FunFam" id="1.10.132.20:FF:000001">
    <property type="entry name" value="Ribosome-recycling factor"/>
    <property type="match status" value="1"/>
</dbReference>
<dbReference type="FunFam" id="3.30.1360.40:FF:000001">
    <property type="entry name" value="Ribosome-recycling factor"/>
    <property type="match status" value="1"/>
</dbReference>
<dbReference type="Gene3D" id="3.30.1360.40">
    <property type="match status" value="1"/>
</dbReference>
<dbReference type="Gene3D" id="1.10.132.20">
    <property type="entry name" value="Ribosome-recycling factor"/>
    <property type="match status" value="1"/>
</dbReference>
<dbReference type="HAMAP" id="MF_00040">
    <property type="entry name" value="RRF"/>
    <property type="match status" value="1"/>
</dbReference>
<dbReference type="InterPro" id="IPR002661">
    <property type="entry name" value="Ribosome_recyc_fac"/>
</dbReference>
<dbReference type="InterPro" id="IPR023584">
    <property type="entry name" value="Ribosome_recyc_fac_dom"/>
</dbReference>
<dbReference type="InterPro" id="IPR036191">
    <property type="entry name" value="RRF_sf"/>
</dbReference>
<dbReference type="NCBIfam" id="TIGR00496">
    <property type="entry name" value="frr"/>
    <property type="match status" value="1"/>
</dbReference>
<dbReference type="PANTHER" id="PTHR20982:SF3">
    <property type="entry name" value="MITOCHONDRIAL RIBOSOME RECYCLING FACTOR PSEUDO 1"/>
    <property type="match status" value="1"/>
</dbReference>
<dbReference type="PANTHER" id="PTHR20982">
    <property type="entry name" value="RIBOSOME RECYCLING FACTOR"/>
    <property type="match status" value="1"/>
</dbReference>
<dbReference type="Pfam" id="PF01765">
    <property type="entry name" value="RRF"/>
    <property type="match status" value="1"/>
</dbReference>
<dbReference type="SUPFAM" id="SSF55194">
    <property type="entry name" value="Ribosome recycling factor, RRF"/>
    <property type="match status" value="1"/>
</dbReference>